<organism>
    <name type="scientific">Homo sapiens</name>
    <name type="common">Human</name>
    <dbReference type="NCBI Taxonomy" id="9606"/>
    <lineage>
        <taxon>Eukaryota</taxon>
        <taxon>Metazoa</taxon>
        <taxon>Chordata</taxon>
        <taxon>Craniata</taxon>
        <taxon>Vertebrata</taxon>
        <taxon>Euteleostomi</taxon>
        <taxon>Mammalia</taxon>
        <taxon>Eutheria</taxon>
        <taxon>Euarchontoglires</taxon>
        <taxon>Primates</taxon>
        <taxon>Haplorrhini</taxon>
        <taxon>Catarrhini</taxon>
        <taxon>Hominidae</taxon>
        <taxon>Homo</taxon>
    </lineage>
</organism>
<keyword id="KW-0025">Alternative splicing</keyword>
<keyword id="KW-1015">Disulfide bond</keyword>
<keyword id="KW-0325">Glycoprotein</keyword>
<keyword id="KW-0393">Immunoglobulin domain</keyword>
<keyword id="KW-0472">Membrane</keyword>
<keyword id="KW-1267">Proteomics identification</keyword>
<keyword id="KW-1185">Reference proteome</keyword>
<keyword id="KW-0677">Repeat</keyword>
<keyword id="KW-0732">Signal</keyword>
<keyword id="KW-0812">Transmembrane</keyword>
<keyword id="KW-1133">Transmembrane helix</keyword>
<reference key="1">
    <citation type="journal article" date="1999" name="Genomics">
        <title>Endogenous retroviruses provide the primary polyadenylation signal for two new human genes (HHLA2 and HHLA3).</title>
        <authorList>
            <person name="Mager D.L."/>
            <person name="Hunter D.G."/>
            <person name="Schertzer M."/>
            <person name="Freeman J.D."/>
        </authorList>
    </citation>
    <scope>NUCLEOTIDE SEQUENCE [MRNA] (ISOFORM 1)</scope>
    <scope>TISSUE SPECIFICITY</scope>
</reference>
<reference key="2">
    <citation type="journal article" date="2004" name="Nat. Genet.">
        <title>Complete sequencing and characterization of 21,243 full-length human cDNAs.</title>
        <authorList>
            <person name="Ota T."/>
            <person name="Suzuki Y."/>
            <person name="Nishikawa T."/>
            <person name="Otsuki T."/>
            <person name="Sugiyama T."/>
            <person name="Irie R."/>
            <person name="Wakamatsu A."/>
            <person name="Hayashi K."/>
            <person name="Sato H."/>
            <person name="Nagai K."/>
            <person name="Kimura K."/>
            <person name="Makita H."/>
            <person name="Sekine M."/>
            <person name="Obayashi M."/>
            <person name="Nishi T."/>
            <person name="Shibahara T."/>
            <person name="Tanaka T."/>
            <person name="Ishii S."/>
            <person name="Yamamoto J."/>
            <person name="Saito K."/>
            <person name="Kawai Y."/>
            <person name="Isono Y."/>
            <person name="Nakamura Y."/>
            <person name="Nagahari K."/>
            <person name="Murakami K."/>
            <person name="Yasuda T."/>
            <person name="Iwayanagi T."/>
            <person name="Wagatsuma M."/>
            <person name="Shiratori A."/>
            <person name="Sudo H."/>
            <person name="Hosoiri T."/>
            <person name="Kaku Y."/>
            <person name="Kodaira H."/>
            <person name="Kondo H."/>
            <person name="Sugawara M."/>
            <person name="Takahashi M."/>
            <person name="Kanda K."/>
            <person name="Yokoi T."/>
            <person name="Furuya T."/>
            <person name="Kikkawa E."/>
            <person name="Omura Y."/>
            <person name="Abe K."/>
            <person name="Kamihara K."/>
            <person name="Katsuta N."/>
            <person name="Sato K."/>
            <person name="Tanikawa M."/>
            <person name="Yamazaki M."/>
            <person name="Ninomiya K."/>
            <person name="Ishibashi T."/>
            <person name="Yamashita H."/>
            <person name="Murakawa K."/>
            <person name="Fujimori K."/>
            <person name="Tanai H."/>
            <person name="Kimata M."/>
            <person name="Watanabe M."/>
            <person name="Hiraoka S."/>
            <person name="Chiba Y."/>
            <person name="Ishida S."/>
            <person name="Ono Y."/>
            <person name="Takiguchi S."/>
            <person name="Watanabe S."/>
            <person name="Yosida M."/>
            <person name="Hotuta T."/>
            <person name="Kusano J."/>
            <person name="Kanehori K."/>
            <person name="Takahashi-Fujii A."/>
            <person name="Hara H."/>
            <person name="Tanase T.-O."/>
            <person name="Nomura Y."/>
            <person name="Togiya S."/>
            <person name="Komai F."/>
            <person name="Hara R."/>
            <person name="Takeuchi K."/>
            <person name="Arita M."/>
            <person name="Imose N."/>
            <person name="Musashino K."/>
            <person name="Yuuki H."/>
            <person name="Oshima A."/>
            <person name="Sasaki N."/>
            <person name="Aotsuka S."/>
            <person name="Yoshikawa Y."/>
            <person name="Matsunawa H."/>
            <person name="Ichihara T."/>
            <person name="Shiohata N."/>
            <person name="Sano S."/>
            <person name="Moriya S."/>
            <person name="Momiyama H."/>
            <person name="Satoh N."/>
            <person name="Takami S."/>
            <person name="Terashima Y."/>
            <person name="Suzuki O."/>
            <person name="Nakagawa S."/>
            <person name="Senoh A."/>
            <person name="Mizoguchi H."/>
            <person name="Goto Y."/>
            <person name="Shimizu F."/>
            <person name="Wakebe H."/>
            <person name="Hishigaki H."/>
            <person name="Watanabe T."/>
            <person name="Sugiyama A."/>
            <person name="Takemoto M."/>
            <person name="Kawakami B."/>
            <person name="Yamazaki M."/>
            <person name="Watanabe K."/>
            <person name="Kumagai A."/>
            <person name="Itakura S."/>
            <person name="Fukuzumi Y."/>
            <person name="Fujimori Y."/>
            <person name="Komiyama M."/>
            <person name="Tashiro H."/>
            <person name="Tanigami A."/>
            <person name="Fujiwara T."/>
            <person name="Ono T."/>
            <person name="Yamada K."/>
            <person name="Fujii Y."/>
            <person name="Ozaki K."/>
            <person name="Hirao M."/>
            <person name="Ohmori Y."/>
            <person name="Kawabata A."/>
            <person name="Hikiji T."/>
            <person name="Kobatake N."/>
            <person name="Inagaki H."/>
            <person name="Ikema Y."/>
            <person name="Okamoto S."/>
            <person name="Okitani R."/>
            <person name="Kawakami T."/>
            <person name="Noguchi S."/>
            <person name="Itoh T."/>
            <person name="Shigeta K."/>
            <person name="Senba T."/>
            <person name="Matsumura K."/>
            <person name="Nakajima Y."/>
            <person name="Mizuno T."/>
            <person name="Morinaga M."/>
            <person name="Sasaki M."/>
            <person name="Togashi T."/>
            <person name="Oyama M."/>
            <person name="Hata H."/>
            <person name="Watanabe M."/>
            <person name="Komatsu T."/>
            <person name="Mizushima-Sugano J."/>
            <person name="Satoh T."/>
            <person name="Shirai Y."/>
            <person name="Takahashi Y."/>
            <person name="Nakagawa K."/>
            <person name="Okumura K."/>
            <person name="Nagase T."/>
            <person name="Nomura N."/>
            <person name="Kikuchi H."/>
            <person name="Masuho Y."/>
            <person name="Yamashita R."/>
            <person name="Nakai K."/>
            <person name="Yada T."/>
            <person name="Nakamura Y."/>
            <person name="Ohara O."/>
            <person name="Isogai T."/>
            <person name="Sugano S."/>
        </authorList>
    </citation>
    <scope>NUCLEOTIDE SEQUENCE [LARGE SCALE MRNA] (ISOFORM 2)</scope>
    <source>
        <tissue>Colon</tissue>
        <tissue>Ileal mucosa</tissue>
    </source>
</reference>
<reference key="3">
    <citation type="journal article" date="2006" name="Nature">
        <title>The DNA sequence, annotation and analysis of human chromosome 3.</title>
        <authorList>
            <person name="Muzny D.M."/>
            <person name="Scherer S.E."/>
            <person name="Kaul R."/>
            <person name="Wang J."/>
            <person name="Yu J."/>
            <person name="Sudbrak R."/>
            <person name="Buhay C.J."/>
            <person name="Chen R."/>
            <person name="Cree A."/>
            <person name="Ding Y."/>
            <person name="Dugan-Rocha S."/>
            <person name="Gill R."/>
            <person name="Gunaratne P."/>
            <person name="Harris R.A."/>
            <person name="Hawes A.C."/>
            <person name="Hernandez J."/>
            <person name="Hodgson A.V."/>
            <person name="Hume J."/>
            <person name="Jackson A."/>
            <person name="Khan Z.M."/>
            <person name="Kovar-Smith C."/>
            <person name="Lewis L.R."/>
            <person name="Lozado R.J."/>
            <person name="Metzker M.L."/>
            <person name="Milosavljevic A."/>
            <person name="Miner G.R."/>
            <person name="Morgan M.B."/>
            <person name="Nazareth L.V."/>
            <person name="Scott G."/>
            <person name="Sodergren E."/>
            <person name="Song X.-Z."/>
            <person name="Steffen D."/>
            <person name="Wei S."/>
            <person name="Wheeler D.A."/>
            <person name="Wright M.W."/>
            <person name="Worley K.C."/>
            <person name="Yuan Y."/>
            <person name="Zhang Z."/>
            <person name="Adams C.Q."/>
            <person name="Ansari-Lari M.A."/>
            <person name="Ayele M."/>
            <person name="Brown M.J."/>
            <person name="Chen G."/>
            <person name="Chen Z."/>
            <person name="Clendenning J."/>
            <person name="Clerc-Blankenburg K.P."/>
            <person name="Chen R."/>
            <person name="Chen Z."/>
            <person name="Davis C."/>
            <person name="Delgado O."/>
            <person name="Dinh H.H."/>
            <person name="Dong W."/>
            <person name="Draper H."/>
            <person name="Ernst S."/>
            <person name="Fu G."/>
            <person name="Gonzalez-Garay M.L."/>
            <person name="Garcia D.K."/>
            <person name="Gillett W."/>
            <person name="Gu J."/>
            <person name="Hao B."/>
            <person name="Haugen E."/>
            <person name="Havlak P."/>
            <person name="He X."/>
            <person name="Hennig S."/>
            <person name="Hu S."/>
            <person name="Huang W."/>
            <person name="Jackson L.R."/>
            <person name="Jacob L.S."/>
            <person name="Kelly S.H."/>
            <person name="Kube M."/>
            <person name="Levy R."/>
            <person name="Li Z."/>
            <person name="Liu B."/>
            <person name="Liu J."/>
            <person name="Liu W."/>
            <person name="Lu J."/>
            <person name="Maheshwari M."/>
            <person name="Nguyen B.-V."/>
            <person name="Okwuonu G.O."/>
            <person name="Palmeiri A."/>
            <person name="Pasternak S."/>
            <person name="Perez L.M."/>
            <person name="Phelps K.A."/>
            <person name="Plopper F.J."/>
            <person name="Qiang B."/>
            <person name="Raymond C."/>
            <person name="Rodriguez R."/>
            <person name="Saenphimmachak C."/>
            <person name="Santibanez J."/>
            <person name="Shen H."/>
            <person name="Shen Y."/>
            <person name="Subramanian S."/>
            <person name="Tabor P.E."/>
            <person name="Verduzco D."/>
            <person name="Waldron L."/>
            <person name="Wang J."/>
            <person name="Wang J."/>
            <person name="Wang Q."/>
            <person name="Williams G.A."/>
            <person name="Wong G.K.-S."/>
            <person name="Yao Z."/>
            <person name="Zhang J."/>
            <person name="Zhang X."/>
            <person name="Zhao G."/>
            <person name="Zhou J."/>
            <person name="Zhou Y."/>
            <person name="Nelson D."/>
            <person name="Lehrach H."/>
            <person name="Reinhardt R."/>
            <person name="Naylor S.L."/>
            <person name="Yang H."/>
            <person name="Olson M."/>
            <person name="Weinstock G."/>
            <person name="Gibbs R.A."/>
        </authorList>
    </citation>
    <scope>NUCLEOTIDE SEQUENCE [LARGE SCALE GENOMIC DNA]</scope>
</reference>
<reference key="4">
    <citation type="submission" date="2005-09" db="EMBL/GenBank/DDBJ databases">
        <authorList>
            <person name="Mural R.J."/>
            <person name="Istrail S."/>
            <person name="Sutton G.G."/>
            <person name="Florea L."/>
            <person name="Halpern A.L."/>
            <person name="Mobarry C.M."/>
            <person name="Lippert R."/>
            <person name="Walenz B."/>
            <person name="Shatkay H."/>
            <person name="Dew I."/>
            <person name="Miller J.R."/>
            <person name="Flanigan M.J."/>
            <person name="Edwards N.J."/>
            <person name="Bolanos R."/>
            <person name="Fasulo D."/>
            <person name="Halldorsson B.V."/>
            <person name="Hannenhalli S."/>
            <person name="Turner R."/>
            <person name="Yooseph S."/>
            <person name="Lu F."/>
            <person name="Nusskern D.R."/>
            <person name="Shue B.C."/>
            <person name="Zheng X.H."/>
            <person name="Zhong F."/>
            <person name="Delcher A.L."/>
            <person name="Huson D.H."/>
            <person name="Kravitz S.A."/>
            <person name="Mouchard L."/>
            <person name="Reinert K."/>
            <person name="Remington K.A."/>
            <person name="Clark A.G."/>
            <person name="Waterman M.S."/>
            <person name="Eichler E.E."/>
            <person name="Adams M.D."/>
            <person name="Hunkapiller M.W."/>
            <person name="Myers E.W."/>
            <person name="Venter J.C."/>
        </authorList>
    </citation>
    <scope>NUCLEOTIDE SEQUENCE [LARGE SCALE GENOMIC DNA]</scope>
</reference>
<reference key="5">
    <citation type="journal article" date="2004" name="Genome Res.">
        <title>The status, quality, and expansion of the NIH full-length cDNA project: the Mammalian Gene Collection (MGC).</title>
        <authorList>
            <consortium name="The MGC Project Team"/>
        </authorList>
    </citation>
    <scope>NUCLEOTIDE SEQUENCE [LARGE SCALE MRNA] (ISOFORM 1)</scope>
    <source>
        <tissue>Kidney</tissue>
    </source>
</reference>
<reference key="6">
    <citation type="journal article" date="2013" name="Nat. Commun.">
        <title>B7-H5 costimulates human T cells via CD28H.</title>
        <authorList>
            <person name="Zhu Y."/>
            <person name="Yao S."/>
            <person name="Iliopoulou B.P."/>
            <person name="Han X."/>
            <person name="Augustine M.M."/>
            <person name="Xu H."/>
            <person name="Phennicie R.T."/>
            <person name="Flies S.J."/>
            <person name="Broadwater M."/>
            <person name="Ruff W."/>
            <person name="Taube J.M."/>
            <person name="Zheng L."/>
            <person name="Luo L."/>
            <person name="Zhu G."/>
            <person name="Chen J."/>
            <person name="Chen L."/>
        </authorList>
    </citation>
    <scope>FUNCTION IN T-CELL COSTIMULATION</scope>
    <scope>INTERACTION WITH TMIGD2</scope>
    <scope>TISSUE SPECIFICITY</scope>
    <scope>INDUCTION</scope>
</reference>
<comment type="function">
    <text evidence="6">Through interaction with TMIGD2, costimulates T-cells in the context of TCR-mediated activation. Enhances T-cell proliferation and cytokine production via an AKT-dependent signaling cascade.</text>
</comment>
<comment type="subunit">
    <text evidence="6">Interacts with TMIGD2.</text>
</comment>
<comment type="interaction">
    <interactant intactId="EBI-2867874">
        <id>Q9UM44</id>
    </interactant>
    <interactant intactId="EBI-17444777">
        <id>O43315</id>
        <label>AQP9</label>
    </interactant>
    <organismsDiffer>false</organismsDiffer>
    <experiments>3</experiments>
</comment>
<comment type="interaction">
    <interactant intactId="EBI-2867874">
        <id>Q9UM44</id>
    </interactant>
    <interactant intactId="EBI-12244618">
        <id>Q6PL45-2</id>
        <label>BRICD5</label>
    </interactant>
    <organismsDiffer>false</organismsDiffer>
    <experiments>3</experiments>
</comment>
<comment type="interaction">
    <interactant intactId="EBI-2867874">
        <id>Q9UM44</id>
    </interactant>
    <interactant intactId="EBI-17442596">
        <id>Q6UX41-6</id>
        <label>BTNL8</label>
    </interactant>
    <organismsDiffer>false</organismsDiffer>
    <experiments>3</experiments>
</comment>
<comment type="interaction">
    <interactant intactId="EBI-2867874">
        <id>Q9UM44</id>
    </interactant>
    <interactant intactId="EBI-10976398">
        <id>Q7Z2K6</id>
        <label>ERMP1</label>
    </interactant>
    <organismsDiffer>false</organismsDiffer>
    <experiments>3</experiments>
</comment>
<comment type="interaction">
    <interactant intactId="EBI-2867874">
        <id>Q9UM44</id>
    </interactant>
    <interactant intactId="EBI-2876774">
        <id>Q92520</id>
        <label>FAM3C</label>
    </interactant>
    <organismsDiffer>false</organismsDiffer>
    <experiments>3</experiments>
</comment>
<comment type="interaction">
    <interactant intactId="EBI-2867874">
        <id>Q9UM44</id>
    </interactant>
    <interactant intactId="EBI-9550165">
        <id>Q0D2K0</id>
        <label>NIPAL4</label>
    </interactant>
    <organismsDiffer>false</organismsDiffer>
    <experiments>3</experiments>
</comment>
<comment type="interaction">
    <interactant intactId="EBI-2867874">
        <id>Q9UM44</id>
    </interactant>
    <interactant intactId="EBI-10262547">
        <id>Q8IXM6</id>
        <label>NRM</label>
    </interactant>
    <organismsDiffer>false</organismsDiffer>
    <experiments>3</experiments>
</comment>
<comment type="interaction">
    <interactant intactId="EBI-2867874">
        <id>Q9UM44</id>
    </interactant>
    <interactant intactId="EBI-12957629">
        <id>P0DJD7</id>
        <label>PGA4</label>
    </interactant>
    <organismsDiffer>false</organismsDiffer>
    <experiments>3</experiments>
</comment>
<comment type="interaction">
    <interactant intactId="EBI-2867874">
        <id>Q9UM44</id>
    </interactant>
    <interactant intactId="EBI-1052363">
        <id>Q9NS64</id>
        <label>RPRM</label>
    </interactant>
    <organismsDiffer>false</organismsDiffer>
    <experiments>3</experiments>
</comment>
<comment type="interaction">
    <interactant intactId="EBI-2867874">
        <id>Q9UM44</id>
    </interactant>
    <interactant intactId="EBI-10314552">
        <id>Q9NVC3</id>
        <label>SLC38A7</label>
    </interactant>
    <organismsDiffer>false</organismsDiffer>
    <experiments>3</experiments>
</comment>
<comment type="interaction">
    <interactant intactId="EBI-2867874">
        <id>Q9UM44</id>
    </interactant>
    <interactant intactId="EBI-10290130">
        <id>Q96JW4</id>
        <label>SLC41A2</label>
    </interactant>
    <organismsDiffer>false</organismsDiffer>
    <experiments>3</experiments>
</comment>
<comment type="interaction">
    <interactant intactId="EBI-2867874">
        <id>Q9UM44</id>
    </interactant>
    <interactant intactId="EBI-8640191">
        <id>Q9NRQ5</id>
        <label>SMCO4</label>
    </interactant>
    <organismsDiffer>false</organismsDiffer>
    <experiments>3</experiments>
</comment>
<comment type="interaction">
    <interactant intactId="EBI-2867874">
        <id>Q9UM44</id>
    </interactant>
    <interactant intactId="EBI-2844246">
        <id>Q9NV12</id>
        <label>TMEM140</label>
    </interactant>
    <organismsDiffer>false</organismsDiffer>
    <experiments>3</experiments>
</comment>
<comment type="interaction">
    <interactant intactId="EBI-2867874">
        <id>Q9UM44</id>
    </interactant>
    <interactant intactId="EBI-12003398">
        <id>Q9H2S6-2</id>
        <label>TNMD</label>
    </interactant>
    <organismsDiffer>false</organismsDiffer>
    <experiments>3</experiments>
</comment>
<comment type="interaction">
    <interactant intactId="EBI-2867874">
        <id>Q9UM44</id>
    </interactant>
    <interactant intactId="EBI-10243654">
        <id>Q5BVD1</id>
        <label>TTMP</label>
    </interactant>
    <organismsDiffer>false</organismsDiffer>
    <experiments>3</experiments>
</comment>
<comment type="interaction">
    <interactant intactId="EBI-2867874">
        <id>Q9UM44</id>
    </interactant>
    <interactant intactId="EBI-4401271">
        <id>Q9H1C4</id>
        <label>UNC93B1</label>
    </interactant>
    <organismsDiffer>false</organismsDiffer>
    <experiments>3</experiments>
</comment>
<comment type="subcellular location">
    <subcellularLocation>
        <location evidence="1">Membrane</location>
        <topology evidence="1">Single-pass type I membrane protein</topology>
    </subcellularLocation>
</comment>
<comment type="alternative products">
    <event type="alternative splicing"/>
    <isoform>
        <id>Q9UM44-1</id>
        <name>1</name>
        <sequence type="displayed"/>
    </isoform>
    <isoform>
        <id>Q9UM44-2</id>
        <name>2</name>
        <sequence type="described" ref="VSP_054729"/>
    </isoform>
</comment>
<comment type="tissue specificity">
    <text evidence="5 6">Expressed at high levels in colon, kidney, testis, lung and pancreas, and at lower levels in small intestine, liver and skeletal muscle. In immune cells, highly expressed in B-cells, dendritic cells and macrophages. Not detected in T-cells.</text>
</comment>
<comment type="induction">
    <text evidence="6">Up-regulated in antigen-presenting cells in response to inflammation. Induced in dendritic cells in response to IFNG, poly(I:C) or heat-killed Listeria monocytogenes (at protein level).</text>
</comment>
<comment type="sequence caution" evidence="8">
    <conflict type="erroneous termination">
        <sequence resource="EMBL-CDS" id="BAA91323"/>
    </conflict>
    <text>Truncated C-terminus.</text>
</comment>
<proteinExistence type="evidence at protein level"/>
<name>HHLA2_HUMAN</name>
<gene>
    <name type="primary">HHLA2</name>
</gene>
<feature type="signal peptide" evidence="2">
    <location>
        <begin position="1"/>
        <end position="22"/>
    </location>
</feature>
<feature type="chain" id="PRO_0000249709" description="HERV-H LTR-associating protein 2">
    <location>
        <begin position="23"/>
        <end position="414"/>
    </location>
</feature>
<feature type="transmembrane region" description="Helical" evidence="2">
    <location>
        <begin position="345"/>
        <end position="365"/>
    </location>
</feature>
<feature type="domain" description="Ig-like V-type 1">
    <location>
        <begin position="61"/>
        <end position="131"/>
    </location>
</feature>
<feature type="domain" description="Ig-like C1-type">
    <location>
        <begin position="138"/>
        <end position="222"/>
    </location>
</feature>
<feature type="domain" description="Ig-like V-type 2">
    <location>
        <begin position="235"/>
        <end position="328"/>
    </location>
</feature>
<feature type="region of interest" description="Disordered" evidence="4">
    <location>
        <begin position="383"/>
        <end position="414"/>
    </location>
</feature>
<feature type="glycosylation site" description="N-linked (GlcNAc...) asparagine" evidence="2">
    <location>
        <position position="90"/>
    </location>
</feature>
<feature type="glycosylation site" description="N-linked (GlcNAc...) asparagine" evidence="2">
    <location>
        <position position="103"/>
    </location>
</feature>
<feature type="glycosylation site" description="N-linked (GlcNAc...) asparagine" evidence="2">
    <location>
        <position position="318"/>
    </location>
</feature>
<feature type="disulfide bond" evidence="3">
    <location>
        <begin position="159"/>
        <end position="210"/>
    </location>
</feature>
<feature type="disulfide bond" evidence="3">
    <location>
        <begin position="243"/>
        <end position="317"/>
    </location>
</feature>
<feature type="splice variant" id="VSP_054729" description="In isoform 2." evidence="7">
    <original>MKAQTALSFFLILITSLSGSQGIFPLAFFIYVPMNEQIVIGRLDEDIILPSSFERGSEVVIHWKYQDSYKVHSYYKGSDHLESQDPRYANRTSLFYNEIQNGNASLFF</original>
    <variation>MVMWNILKPRTHLLCMTNMFCTRHEGTDSTVFLPHSHNISEWIS</variation>
    <location>
        <begin position="1"/>
        <end position="108"/>
    </location>
</feature>
<feature type="sequence variant" id="VAR_027487" description="In dbSNP:rs6779254.">
    <original>I</original>
    <variation>T</variation>
    <location>
        <position position="30"/>
    </location>
</feature>
<feature type="sequence variant" id="VAR_027488" description="In dbSNP:rs3792332.">
    <original>N</original>
    <variation>K</variation>
    <location>
        <position position="344"/>
    </location>
</feature>
<feature type="sequence variant" id="VAR_027489" description="In dbSNP:rs6779094.">
    <original>S</original>
    <variation>R</variation>
    <location>
        <position position="364"/>
    </location>
</feature>
<dbReference type="EMBL" id="AF126162">
    <property type="protein sequence ID" value="AAD48396.1"/>
    <property type="molecule type" value="mRNA"/>
</dbReference>
<dbReference type="EMBL" id="AK000692">
    <property type="protein sequence ID" value="BAA91323.1"/>
    <property type="status" value="ALT_SEQ"/>
    <property type="molecule type" value="mRNA"/>
</dbReference>
<dbReference type="EMBL" id="AK296644">
    <property type="protein sequence ID" value="BAG59244.1"/>
    <property type="molecule type" value="mRNA"/>
</dbReference>
<dbReference type="EMBL" id="AC078855">
    <property type="status" value="NOT_ANNOTATED_CDS"/>
    <property type="molecule type" value="Genomic_DNA"/>
</dbReference>
<dbReference type="EMBL" id="AC135308">
    <property type="status" value="NOT_ANNOTATED_CDS"/>
    <property type="molecule type" value="Genomic_DNA"/>
</dbReference>
<dbReference type="EMBL" id="CH471052">
    <property type="protein sequence ID" value="EAW79727.1"/>
    <property type="molecule type" value="Genomic_DNA"/>
</dbReference>
<dbReference type="EMBL" id="CH471052">
    <property type="protein sequence ID" value="EAW79728.1"/>
    <property type="molecule type" value="Genomic_DNA"/>
</dbReference>
<dbReference type="EMBL" id="BC035971">
    <property type="protein sequence ID" value="AAH35971.1"/>
    <property type="molecule type" value="mRNA"/>
</dbReference>
<dbReference type="CCDS" id="CCDS46883.1">
    <molecule id="Q9UM44-1"/>
</dbReference>
<dbReference type="CCDS" id="CCDS63713.1">
    <molecule id="Q9UM44-2"/>
</dbReference>
<dbReference type="RefSeq" id="NP_001269485.1">
    <molecule id="Q9UM44-1"/>
    <property type="nucleotide sequence ID" value="NM_001282556.2"/>
</dbReference>
<dbReference type="RefSeq" id="NP_001269486.1">
    <molecule id="Q9UM44-1"/>
    <property type="nucleotide sequence ID" value="NM_001282557.2"/>
</dbReference>
<dbReference type="RefSeq" id="NP_001269487.1">
    <property type="nucleotide sequence ID" value="NM_001282558.1"/>
</dbReference>
<dbReference type="RefSeq" id="NP_001269488.1">
    <molecule id="Q9UM44-2"/>
    <property type="nucleotide sequence ID" value="NM_001282559.2"/>
</dbReference>
<dbReference type="RefSeq" id="NP_001357173.1">
    <molecule id="Q9UM44-1"/>
    <property type="nucleotide sequence ID" value="NM_001370244.1"/>
</dbReference>
<dbReference type="RefSeq" id="NP_009003.1">
    <molecule id="Q9UM44-1"/>
    <property type="nucleotide sequence ID" value="NM_007072.4"/>
</dbReference>
<dbReference type="RefSeq" id="XP_005247137.1">
    <molecule id="Q9UM44-1"/>
    <property type="nucleotide sequence ID" value="XM_005247080.4"/>
</dbReference>
<dbReference type="RefSeq" id="XP_016861131.1">
    <property type="nucleotide sequence ID" value="XM_017005642.1"/>
</dbReference>
<dbReference type="SMR" id="Q9UM44"/>
<dbReference type="BioGRID" id="116320">
    <property type="interactions" value="14"/>
</dbReference>
<dbReference type="FunCoup" id="Q9UM44">
    <property type="interactions" value="25"/>
</dbReference>
<dbReference type="IntAct" id="Q9UM44">
    <property type="interactions" value="17"/>
</dbReference>
<dbReference type="STRING" id="9606.ENSP00000350402"/>
<dbReference type="GlyCosmos" id="Q9UM44">
    <property type="glycosylation" value="3 sites, No reported glycans"/>
</dbReference>
<dbReference type="GlyGen" id="Q9UM44">
    <property type="glycosylation" value="4 sites, 1 O-linked glycan (1 site)"/>
</dbReference>
<dbReference type="iPTMnet" id="Q9UM44"/>
<dbReference type="BioMuta" id="HHLA2"/>
<dbReference type="DMDM" id="74762781"/>
<dbReference type="jPOST" id="Q9UM44"/>
<dbReference type="MassIVE" id="Q9UM44"/>
<dbReference type="PaxDb" id="9606-ENSP00000350402"/>
<dbReference type="PeptideAtlas" id="Q9UM44"/>
<dbReference type="ProteomicsDB" id="4474"/>
<dbReference type="ProteomicsDB" id="85175">
    <molecule id="Q9UM44-1"/>
</dbReference>
<dbReference type="ABCD" id="Q9UM44">
    <property type="antibodies" value="2 sequenced antibodies"/>
</dbReference>
<dbReference type="Antibodypedia" id="32369">
    <property type="antibodies" value="216 antibodies from 28 providers"/>
</dbReference>
<dbReference type="DNASU" id="11148"/>
<dbReference type="Ensembl" id="ENST00000357759.9">
    <molecule id="Q9UM44-1"/>
    <property type="protein sequence ID" value="ENSP00000350402.5"/>
    <property type="gene ID" value="ENSG00000114455.15"/>
</dbReference>
<dbReference type="Ensembl" id="ENST00000467562.5">
    <molecule id="Q9UM44-2"/>
    <property type="protein sequence ID" value="ENSP00000418345.1"/>
    <property type="gene ID" value="ENSG00000114455.15"/>
</dbReference>
<dbReference type="Ensembl" id="ENST00000467761.6">
    <molecule id="Q9UM44-1"/>
    <property type="protein sequence ID" value="ENSP00000419207.1"/>
    <property type="gene ID" value="ENSG00000114455.15"/>
</dbReference>
<dbReference type="Ensembl" id="ENST00000489514.6">
    <molecule id="Q9UM44-1"/>
    <property type="protein sequence ID" value="ENSP00000417856.2"/>
    <property type="gene ID" value="ENSG00000114455.15"/>
</dbReference>
<dbReference type="GeneID" id="11148"/>
<dbReference type="KEGG" id="hsa:11148"/>
<dbReference type="MANE-Select" id="ENST00000467761.6">
    <property type="protein sequence ID" value="ENSP00000419207.1"/>
    <property type="RefSeq nucleotide sequence ID" value="NM_001282556.2"/>
    <property type="RefSeq protein sequence ID" value="NP_001269485.1"/>
</dbReference>
<dbReference type="UCSC" id="uc003dwz.5">
    <molecule id="Q9UM44-1"/>
    <property type="organism name" value="human"/>
</dbReference>
<dbReference type="AGR" id="HGNC:4905"/>
<dbReference type="CTD" id="11148"/>
<dbReference type="DisGeNET" id="11148"/>
<dbReference type="GeneCards" id="HHLA2"/>
<dbReference type="HGNC" id="HGNC:4905">
    <property type="gene designation" value="HHLA2"/>
</dbReference>
<dbReference type="HPA" id="ENSG00000114455">
    <property type="expression patterns" value="Tissue enriched (intestine)"/>
</dbReference>
<dbReference type="MIM" id="604371">
    <property type="type" value="gene"/>
</dbReference>
<dbReference type="neXtProt" id="NX_Q9UM44"/>
<dbReference type="OpenTargets" id="ENSG00000114455"/>
<dbReference type="PharmGKB" id="PA29278"/>
<dbReference type="VEuPathDB" id="HostDB:ENSG00000114455"/>
<dbReference type="eggNOG" id="ENOG502S3IN">
    <property type="taxonomic scope" value="Eukaryota"/>
</dbReference>
<dbReference type="GeneTree" id="ENSGT00940000162944"/>
<dbReference type="InParanoid" id="Q9UM44"/>
<dbReference type="OMA" id="TIYEPRV"/>
<dbReference type="OrthoDB" id="9983389at2759"/>
<dbReference type="PAN-GO" id="Q9UM44">
    <property type="GO annotations" value="4 GO annotations based on evolutionary models"/>
</dbReference>
<dbReference type="PhylomeDB" id="Q9UM44"/>
<dbReference type="TreeFam" id="TF331083"/>
<dbReference type="PathwayCommons" id="Q9UM44"/>
<dbReference type="SignaLink" id="Q9UM44"/>
<dbReference type="BioGRID-ORCS" id="11148">
    <property type="hits" value="7 hits in 1141 CRISPR screens"/>
</dbReference>
<dbReference type="ChiTaRS" id="HHLA2">
    <property type="organism name" value="human"/>
</dbReference>
<dbReference type="GenomeRNAi" id="11148"/>
<dbReference type="Pharos" id="Q9UM44">
    <property type="development level" value="Tbio"/>
</dbReference>
<dbReference type="PRO" id="PR:Q9UM44"/>
<dbReference type="Proteomes" id="UP000005640">
    <property type="component" value="Chromosome 3"/>
</dbReference>
<dbReference type="RNAct" id="Q9UM44">
    <property type="molecule type" value="protein"/>
</dbReference>
<dbReference type="Bgee" id="ENSG00000114455">
    <property type="expression patterns" value="Expressed in rectum and 78 other cell types or tissues"/>
</dbReference>
<dbReference type="ExpressionAtlas" id="Q9UM44">
    <property type="expression patterns" value="baseline and differential"/>
</dbReference>
<dbReference type="GO" id="GO:0009897">
    <property type="term" value="C:external side of plasma membrane"/>
    <property type="evidence" value="ECO:0000318"/>
    <property type="project" value="GO_Central"/>
</dbReference>
<dbReference type="GO" id="GO:0005102">
    <property type="term" value="F:signaling receptor binding"/>
    <property type="evidence" value="ECO:0000318"/>
    <property type="project" value="GO_Central"/>
</dbReference>
<dbReference type="GO" id="GO:0042104">
    <property type="term" value="P:positive regulation of activated T cell proliferation"/>
    <property type="evidence" value="ECO:0000314"/>
    <property type="project" value="UniProtKB"/>
</dbReference>
<dbReference type="GO" id="GO:0001819">
    <property type="term" value="P:positive regulation of cytokine production"/>
    <property type="evidence" value="ECO:0000314"/>
    <property type="project" value="UniProtKB"/>
</dbReference>
<dbReference type="GO" id="GO:0001817">
    <property type="term" value="P:regulation of cytokine production"/>
    <property type="evidence" value="ECO:0000318"/>
    <property type="project" value="GO_Central"/>
</dbReference>
<dbReference type="GO" id="GO:0031295">
    <property type="term" value="P:T cell costimulation"/>
    <property type="evidence" value="ECO:0000314"/>
    <property type="project" value="UniProtKB"/>
</dbReference>
<dbReference type="GO" id="GO:0050852">
    <property type="term" value="P:T cell receptor signaling pathway"/>
    <property type="evidence" value="ECO:0000318"/>
    <property type="project" value="GO_Central"/>
</dbReference>
<dbReference type="CDD" id="cd16091">
    <property type="entry name" value="IgV_HHLA2"/>
    <property type="match status" value="1"/>
</dbReference>
<dbReference type="FunFam" id="2.60.40.10:FF:001051">
    <property type="entry name" value="HERV-H LTR-associating 2"/>
    <property type="match status" value="1"/>
</dbReference>
<dbReference type="FunFam" id="2.60.40.10:FF:001310">
    <property type="entry name" value="HERV-H LTR-associating 2"/>
    <property type="match status" value="1"/>
</dbReference>
<dbReference type="FunFam" id="2.60.40.10:FF:000142">
    <property type="entry name" value="V-set domain-containing T-cell activation inhibitor 1"/>
    <property type="match status" value="1"/>
</dbReference>
<dbReference type="Gene3D" id="2.60.40.10">
    <property type="entry name" value="Immunoglobulins"/>
    <property type="match status" value="3"/>
</dbReference>
<dbReference type="InterPro" id="IPR007110">
    <property type="entry name" value="Ig-like_dom"/>
</dbReference>
<dbReference type="InterPro" id="IPR036179">
    <property type="entry name" value="Ig-like_dom_sf"/>
</dbReference>
<dbReference type="InterPro" id="IPR013783">
    <property type="entry name" value="Ig-like_fold"/>
</dbReference>
<dbReference type="InterPro" id="IPR003597">
    <property type="entry name" value="Ig_C1-set"/>
</dbReference>
<dbReference type="InterPro" id="IPR003599">
    <property type="entry name" value="Ig_sub"/>
</dbReference>
<dbReference type="InterPro" id="IPR013106">
    <property type="entry name" value="Ig_V-set"/>
</dbReference>
<dbReference type="InterPro" id="IPR050504">
    <property type="entry name" value="IgSF_BTN/MOG"/>
</dbReference>
<dbReference type="PANTHER" id="PTHR24100">
    <property type="entry name" value="BUTYROPHILIN"/>
    <property type="match status" value="1"/>
</dbReference>
<dbReference type="Pfam" id="PF07654">
    <property type="entry name" value="C1-set"/>
    <property type="match status" value="1"/>
</dbReference>
<dbReference type="Pfam" id="PF07686">
    <property type="entry name" value="V-set"/>
    <property type="match status" value="2"/>
</dbReference>
<dbReference type="SMART" id="SM00409">
    <property type="entry name" value="IG"/>
    <property type="match status" value="2"/>
</dbReference>
<dbReference type="SMART" id="SM00406">
    <property type="entry name" value="IGv"/>
    <property type="match status" value="2"/>
</dbReference>
<dbReference type="SUPFAM" id="SSF48726">
    <property type="entry name" value="Immunoglobulin"/>
    <property type="match status" value="3"/>
</dbReference>
<dbReference type="PROSITE" id="PS50835">
    <property type="entry name" value="IG_LIKE"/>
    <property type="match status" value="2"/>
</dbReference>
<accession>Q9UM44</accession>
<accession>B4DKN2</accession>
<accession>D3DN60</accession>
<accession>Q9NWQ6</accession>
<protein>
    <recommendedName>
        <fullName>HERV-H LTR-associating protein 2</fullName>
    </recommendedName>
    <alternativeName>
        <fullName>Human endogenous retrovirus-H long terminal repeat-associating protein 2</fullName>
    </alternativeName>
</protein>
<evidence type="ECO:0000250" key="1"/>
<evidence type="ECO:0000255" key="2"/>
<evidence type="ECO:0000255" key="3">
    <source>
        <dbReference type="PROSITE-ProRule" id="PRU00114"/>
    </source>
</evidence>
<evidence type="ECO:0000256" key="4">
    <source>
        <dbReference type="SAM" id="MobiDB-lite"/>
    </source>
</evidence>
<evidence type="ECO:0000269" key="5">
    <source>
    </source>
</evidence>
<evidence type="ECO:0000269" key="6">
    <source>
    </source>
</evidence>
<evidence type="ECO:0000303" key="7">
    <source>
    </source>
</evidence>
<evidence type="ECO:0000305" key="8"/>
<sequence length="414" mass="46850">MKAQTALSFFLILITSLSGSQGIFPLAFFIYVPMNEQIVIGRLDEDIILPSSFERGSEVVIHWKYQDSYKVHSYYKGSDHLESQDPRYANRTSLFYNEIQNGNASLFFRRVSLLDEGIYTCYVGTAIQVITNKVVLKVGVFLTPVMKYEKRNTNSFLICSVLSVYPRPIITWKMDNTPISENNMEETGSLDSFSINSPLNITGSNSSYECTIENSLLKQTWTGRWTMKDGLHKMQSEHVSLSCQPVNDYFSPNQDFKVTWSRMKSGTFSVLAYYLSSSQNTIINESRFSWNKELINQSDFSMNLMDLNLSDSGEYLCNISSDEYTLLTIHTVHVEPSQETASHNKGLWILVPSAILAAFLLIWSVKCCRAQLEARRSRHPADGAQQERCCVPPGERCPSAPDNGEENVPLSGKV</sequence>